<keyword id="KW-0002">3D-structure</keyword>
<keyword id="KW-0903">Direct protein sequencing</keyword>
<keyword id="KW-0456">Lyase</keyword>
<keyword id="KW-0614">Plasmid</keyword>
<keyword id="KW-1185">Reference proteome</keyword>
<keyword id="KW-0964">Secreted</keyword>
<keyword id="KW-0843">Virulence</keyword>
<geneLocation type="plasmid">
    <name>pWR100</name>
</geneLocation>
<geneLocation type="plasmid">
    <name>pWR501</name>
</geneLocation>
<geneLocation type="plasmid">
    <name>pCP301</name>
</geneLocation>
<geneLocation type="plasmid">
    <name>pSF5</name>
</geneLocation>
<geneLocation type="plasmid">
    <name>pINV_F6_M1382</name>
</geneLocation>
<geneLocation type="plasmid">
    <name>pSf2b_251</name>
</geneLocation>
<geneLocation type="plasmid">
    <name>pSf1a_571</name>
</geneLocation>
<geneLocation type="plasmid">
    <name>pSfx_580</name>
</geneLocation>
<geneLocation type="plasmid">
    <name>pSf6_579</name>
</geneLocation>
<geneLocation type="plasmid">
    <name>pSf3_575</name>
</geneLocation>
<geneLocation type="plasmid">
    <name>pSf4a_576</name>
</geneLocation>
<geneLocation type="plasmid">
    <name>pSf4b_577</name>
</geneLocation>
<geneLocation type="plasmid">
    <name>pSf5_246</name>
</geneLocation>
<organism>
    <name type="scientific">Shigella flexneri</name>
    <dbReference type="NCBI Taxonomy" id="623"/>
    <lineage>
        <taxon>Bacteria</taxon>
        <taxon>Pseudomonadati</taxon>
        <taxon>Pseudomonadota</taxon>
        <taxon>Gammaproteobacteria</taxon>
        <taxon>Enterobacterales</taxon>
        <taxon>Enterobacteriaceae</taxon>
        <taxon>Shigella</taxon>
    </lineage>
</organism>
<gene>
    <name type="primary">ospF</name>
    <name type="synonym">mkaD</name>
    <name type="ordered locus">CP0010</name>
    <name type="ORF">pWR501_0013</name>
    <name type="ORF">SFLP011</name>
</gene>
<sequence length="239" mass="27828">MPIKKPCLKLNLDSLNVVRSEIPQMLSANERLKNNFNILYNQIRQYPAYYFKVASNVPTYSDICQSFSVMYQGFQIVNHSGDVFIHACRENPQSKGDFVGDKFHISIAREQVPLAFQILSGLLFSEDSPIDKWKITDMNRVSQQSRVGIGAQFTLYVKSDQECSQYSALLLHKIRQFIMCLESNLLRSKIAPGEYPASDVRPEDWKYVSYRNELRSDRDGSERQEQMLREEPFYRLMIE</sequence>
<protein>
    <recommendedName>
        <fullName>Phosphothreonine lyase OspF</fullName>
        <ecNumber>4.2.3.-</ecNumber>
    </recommendedName>
    <alternativeName>
        <fullName>Effector protein OspF</fullName>
    </alternativeName>
</protein>
<feature type="chain" id="PRO_0000299354" description="Phosphothreonine lyase OspF">
    <location>
        <begin position="1"/>
        <end position="239"/>
    </location>
</feature>
<feature type="active site" description="Proton donor" evidence="1">
    <location>
        <position position="104"/>
    </location>
</feature>
<feature type="active site" description="Proton acceptor" evidence="1">
    <location>
        <position position="134"/>
    </location>
</feature>
<feature type="sequence variant" description="In plasmid pWR100, plasmid pWR501 and plasmid pSF5.">
    <original>R</original>
    <variation>K</variation>
    <location>
        <position position="19"/>
    </location>
</feature>
<feature type="sequence variant" description="In plasmid pWR100, plasmid pWR501, plasmid pSF5, plasmid pINV_F6_M1382, plasmid pSf6_579, plasmid pSf3_575, plasmid pSf4a_576, plasmid pSf4b_577 and plasmid pSf5_246.">
    <original>S</original>
    <variation>F</variation>
    <location>
        <position position="66"/>
    </location>
</feature>
<feature type="mutagenesis site" description="No change in Erk2 phosphothreonine lyase activity." evidence="6">
    <original>D</original>
    <variation>A</variation>
    <location>
        <position position="101"/>
    </location>
</feature>
<feature type="mutagenesis site" description="Loss of Erk2 phosphothreonine lyase activity. No effect in binding ability to erk. Deficient in down-regulating MAPK signaling." evidence="6">
    <original>K</original>
    <variation>R</variation>
    <location>
        <position position="102"/>
    </location>
</feature>
<feature type="mutagenesis site" description="Loss of Erk2 phosphothreonine lyase activity. No effect in binding ability to erk. Deficient in down-regulating MAPK signaling." evidence="6">
    <original>H</original>
    <variation>A</variation>
    <location>
        <position position="104"/>
    </location>
</feature>
<feature type="mutagenesis site" description="No change in Erk2 phosphothreonine lyase activity." evidence="6">
    <original>D</original>
    <variation>A</variation>
    <location>
        <position position="127"/>
    </location>
</feature>
<feature type="mutagenesis site" description="No change in Erk2 phosphothreonine lyase activity." evidence="6">
    <original>D</original>
    <variation>A</variation>
    <location>
        <position position="131"/>
    </location>
</feature>
<feature type="mutagenesis site" description="Loss of Erk2 phosphothreonine lyase activity. No effect in binding ability to erk. Deficient in down-regulating MAPK signaling." evidence="6">
    <original>K</original>
    <variation>A</variation>
    <location>
        <position position="134"/>
    </location>
</feature>
<feature type="mutagenesis site" description="No change in Erk2 phosphothreonine lyase activity." evidence="6">
    <original>D</original>
    <variation>A</variation>
    <location>
        <position position="137"/>
    </location>
</feature>
<feature type="mutagenesis site" description="No change in Erk2 phosphothreonine lyase activity." evidence="6">
    <original>D</original>
    <variation>A</variation>
    <location>
        <position position="160"/>
    </location>
</feature>
<feature type="mutagenesis site" description="No change in Erk2 phosphothreonine lyase activity." evidence="6">
    <original>R</original>
    <variation>A</variation>
    <location>
        <position position="175"/>
    </location>
</feature>
<feature type="mutagenesis site" description="No change in Erk2 phosphothreonine lyase activity." evidence="6">
    <original>R</original>
    <variation>A</variation>
    <location>
        <position position="218"/>
    </location>
</feature>
<feature type="helix" evidence="9">
    <location>
        <begin position="32"/>
        <end position="43"/>
    </location>
</feature>
<feature type="helix" evidence="9">
    <location>
        <begin position="60"/>
        <end position="65"/>
    </location>
</feature>
<feature type="strand" evidence="9">
    <location>
        <begin position="67"/>
        <end position="71"/>
    </location>
</feature>
<feature type="strand" evidence="9">
    <location>
        <begin position="74"/>
        <end position="77"/>
    </location>
</feature>
<feature type="strand" evidence="9">
    <location>
        <begin position="82"/>
        <end position="91"/>
    </location>
</feature>
<feature type="strand" evidence="9">
    <location>
        <begin position="98"/>
        <end position="105"/>
    </location>
</feature>
<feature type="helix" evidence="9">
    <location>
        <begin position="109"/>
        <end position="111"/>
    </location>
</feature>
<feature type="helix" evidence="9">
    <location>
        <begin position="112"/>
        <end position="123"/>
    </location>
</feature>
<feature type="strand" evidence="9">
    <location>
        <begin position="131"/>
        <end position="136"/>
    </location>
</feature>
<feature type="turn" evidence="9">
    <location>
        <begin position="138"/>
        <end position="140"/>
    </location>
</feature>
<feature type="strand" evidence="9">
    <location>
        <begin position="153"/>
        <end position="158"/>
    </location>
</feature>
<feature type="helix" evidence="9">
    <location>
        <begin position="168"/>
        <end position="187"/>
    </location>
</feature>
<feature type="strand" evidence="9">
    <location>
        <begin position="206"/>
        <end position="214"/>
    </location>
</feature>
<feature type="helix" evidence="9">
    <location>
        <begin position="232"/>
        <end position="238"/>
    </location>
</feature>
<proteinExistence type="evidence at protein level"/>
<accession>Q8VSP9</accession>
<accession>Q2ET10</accession>
<accession>Q2ET14</accession>
<accession>Q6XW10</accession>
<accession>Q7BEG0</accession>
<accession>Q99Q87</accession>
<name>OSPF_SHIFL</name>
<dbReference type="EC" id="4.2.3.-"/>
<dbReference type="EMBL" id="AL391753">
    <property type="protein sequence ID" value="CAC05773.1"/>
    <property type="molecule type" value="Genomic_DNA"/>
</dbReference>
<dbReference type="EMBL" id="AF348706">
    <property type="protein sequence ID" value="AAK18324.1"/>
    <property type="molecule type" value="Genomic_DNA"/>
</dbReference>
<dbReference type="EMBL" id="AY206429">
    <property type="protein sequence ID" value="AAP78969.1"/>
    <property type="molecule type" value="Genomic_DNA"/>
</dbReference>
<dbReference type="EMBL" id="AY879342">
    <property type="protein sequence ID" value="AAW64770.1"/>
    <property type="molecule type" value="Genomic_DNA"/>
</dbReference>
<dbReference type="EMBL" id="AF386526">
    <property type="protein sequence ID" value="AAL72315.1"/>
    <property type="molecule type" value="Genomic_DNA"/>
</dbReference>
<dbReference type="EMBL" id="DQ362850">
    <property type="protein sequence ID" value="ABD37257.1"/>
    <property type="molecule type" value="Genomic_DNA"/>
</dbReference>
<dbReference type="EMBL" id="DQ362864">
    <property type="protein sequence ID" value="ABD37271.1"/>
    <property type="molecule type" value="Genomic_DNA"/>
</dbReference>
<dbReference type="EMBL" id="DQ362865">
    <property type="protein sequence ID" value="ABD37272.1"/>
    <property type="molecule type" value="Genomic_DNA"/>
</dbReference>
<dbReference type="EMBL" id="DQ362866">
    <property type="protein sequence ID" value="ABD37273.1"/>
    <property type="molecule type" value="Genomic_DNA"/>
</dbReference>
<dbReference type="EMBL" id="DQ362867">
    <property type="protein sequence ID" value="ABD37274.1"/>
    <property type="molecule type" value="Genomic_DNA"/>
</dbReference>
<dbReference type="EMBL" id="DQ362868">
    <property type="protein sequence ID" value="ABD37275.1"/>
    <property type="molecule type" value="Genomic_DNA"/>
</dbReference>
<dbReference type="EMBL" id="DQ362869">
    <property type="protein sequence ID" value="ABD37276.1"/>
    <property type="molecule type" value="Genomic_DNA"/>
</dbReference>
<dbReference type="EMBL" id="DQ362870">
    <property type="protein sequence ID" value="ABD37277.1"/>
    <property type="molecule type" value="Genomic_DNA"/>
</dbReference>
<dbReference type="RefSeq" id="NP_858143.1">
    <property type="nucleotide sequence ID" value="NC_004851.1"/>
</dbReference>
<dbReference type="RefSeq" id="WP_001121867.1">
    <property type="nucleotide sequence ID" value="NZ_WPGT01000181.1"/>
</dbReference>
<dbReference type="RefSeq" id="WP_010921598.1">
    <property type="nucleotide sequence ID" value="NZ_UGYR01000002.1"/>
</dbReference>
<dbReference type="RefSeq" id="YP_006960239.1">
    <property type="nucleotide sequence ID" value="NC_019197.1"/>
</dbReference>
<dbReference type="PDB" id="3I0U">
    <property type="method" value="X-ray"/>
    <property type="resolution" value="2.70 A"/>
    <property type="chains" value="A/B=23-239"/>
</dbReference>
<dbReference type="PDBsum" id="3I0U"/>
<dbReference type="SMR" id="Q8VSP9"/>
<dbReference type="IntAct" id="Q8VSP9">
    <property type="interactions" value="3"/>
</dbReference>
<dbReference type="MINT" id="Q8VSP9"/>
<dbReference type="PaxDb" id="198214-CP0010"/>
<dbReference type="GeneID" id="1238011"/>
<dbReference type="KEGG" id="sfl:CP0010"/>
<dbReference type="HOGENOM" id="CLU_100525_0_0_6"/>
<dbReference type="SABIO-RK" id="Q8VSP9"/>
<dbReference type="EvolutionaryTrace" id="Q8VSP9"/>
<dbReference type="PRO" id="PR:Q8VSP9"/>
<dbReference type="Proteomes" id="UP000001006">
    <property type="component" value="Plasmid pCP301"/>
</dbReference>
<dbReference type="GO" id="GO:0005576">
    <property type="term" value="C:extracellular region"/>
    <property type="evidence" value="ECO:0007669"/>
    <property type="project" value="UniProtKB-SubCell"/>
</dbReference>
<dbReference type="GO" id="GO:0016829">
    <property type="term" value="F:lyase activity"/>
    <property type="evidence" value="ECO:0007669"/>
    <property type="project" value="UniProtKB-KW"/>
</dbReference>
<dbReference type="Gene3D" id="3.30.2430.10">
    <property type="entry name" value="phosphothreonine lyase"/>
    <property type="match status" value="1"/>
</dbReference>
<dbReference type="InterPro" id="IPR003519">
    <property type="entry name" value="OspF/SpvC"/>
</dbReference>
<dbReference type="InterPro" id="IPR038498">
    <property type="entry name" value="OspF/SpvC_sf"/>
</dbReference>
<dbReference type="NCBIfam" id="NF011781">
    <property type="entry name" value="PRK15245.1"/>
    <property type="match status" value="1"/>
</dbReference>
<dbReference type="Pfam" id="PF03536">
    <property type="entry name" value="VRP3"/>
    <property type="match status" value="1"/>
</dbReference>
<dbReference type="PRINTS" id="PR01342">
    <property type="entry name" value="SALVRPPROT"/>
</dbReference>
<comment type="function">
    <text evidence="5 6 7">Catalyzes the removal of the phosphate group from the phosphothreonine in the mitogen-activated protein kinases such as MAPK2/ERK2, MAPK3/ERK1, MAPK8 and MAPK14 in an irreversible reaction, thus preventing the downstream phosphorylation of histone H3. This epigenetic modification results in inhibition of the transcription of a specific subset of pro-inflammatory genes, and ultimately to a reduced immune response against the invading pathogen. The diminished immune response enhances the bacterium's ability to disseminate and multiply within the host.</text>
</comment>
<comment type="activity regulation">
    <text evidence="5">Inhibited by the tyrosine phosphatase inhibitor vanadate.</text>
</comment>
<comment type="biophysicochemical properties">
    <kinetics>
        <KM evidence="5 6">204 nM for phosphorylated MAPK2 (at pH 8 and 30 degrees Celsius)</KM>
        <Vmax evidence="5 6">9.89 pM/sec/ug enzyme with phosphorylated MAPK2 as substrate (at pH 8 and 30 degrees Celsius)</Vmax>
    </kinetics>
</comment>
<comment type="interaction">
    <interactant intactId="EBI-6506625">
        <id>Q8VSP9</id>
    </interactant>
    <interactant intactId="EBI-959949">
        <id>P28482</id>
        <label>MAPK1</label>
    </interactant>
    <organismsDiffer>true</organismsDiffer>
    <experiments>5</experiments>
</comment>
<comment type="interaction">
    <interactant intactId="EBI-6506625">
        <id>Q8VSP9</id>
    </interactant>
    <interactant intactId="EBI-491274">
        <id>P06400</id>
        <label>RB1</label>
    </interactant>
    <organismsDiffer>true</organismsDiffer>
    <experiments>2</experiments>
</comment>
<comment type="subcellular location">
    <subcellularLocation>
        <location evidence="2 4 5 7">Secreted</location>
    </subcellularLocation>
    <text>Secreted via the type III secretion system (T3SS). Localizes in the nucleus of the infected cell.</text>
</comment>
<comment type="induction">
    <text evidence="3">Transcriptionally activated by MxiE in the intracellular environment of the host, in association with IpgC, under conditions of deregulated or active secretion. Expressed in a VirB-dependent but MxiE-independent way under conditions of non-secretion.</text>
</comment>
<comment type="similarity">
    <text evidence="8">Belongs to the phosphothreonine lyase family.</text>
</comment>
<reference key="1">
    <citation type="journal article" date="2000" name="Mol. Microbiol.">
        <title>The virulence plasmid pWR100 and the repertoire of proteins secreted by the type III secretion apparatus of Shigella flexneri.</title>
        <authorList>
            <person name="Buchrieser C."/>
            <person name="Glaser P."/>
            <person name="Rusniok C."/>
            <person name="Nedjari H."/>
            <person name="d'Hauteville H."/>
            <person name="Kunst F."/>
            <person name="Sansonetti P.J."/>
            <person name="Parsot C."/>
        </authorList>
    </citation>
    <scope>NUCLEOTIDE SEQUENCE [GENOMIC DNA]</scope>
    <scope>PROTEIN SEQUENCE OF 1-6</scope>
    <scope>SUBCELLULAR LOCATION</scope>
    <source>
        <strain>M90T / Serotype 5a</strain>
        <plasmid>pWR100</plasmid>
    </source>
</reference>
<reference key="2">
    <citation type="journal article" date="2001" name="Infect. Immun.">
        <title>Complete DNA sequence and analysis of the large virulence plasmid of Shigella flexneri.</title>
        <authorList>
            <person name="Venkatesan M.M."/>
            <person name="Goldberg M.B."/>
            <person name="Rose D.J."/>
            <person name="Grotbeck E.J."/>
            <person name="Burland V."/>
            <person name="Blattner F.R."/>
        </authorList>
    </citation>
    <scope>NUCLEOTIDE SEQUENCE [GENOMIC DNA]</scope>
    <source>
        <strain>M90T / Serotype 5a</strain>
        <plasmid>pWR501</plasmid>
    </source>
</reference>
<reference key="3">
    <citation type="journal article" date="2003" name="Infect. Immun.">
        <title>Comparison of two major forms of the Shigella virulence plasmid pINV: positive selection is a major force driving the divergence.</title>
        <authorList>
            <person name="Lan R."/>
            <person name="Stevenson G."/>
            <person name="Reeves P.R."/>
        </authorList>
    </citation>
    <scope>NUCLEOTIDE SEQUENCE [GENOMIC DNA]</scope>
    <source>
        <strain>M1382 / Serotype 6</strain>
        <plasmid>pINV_F6_M1382</plasmid>
    </source>
</reference>
<reference key="4">
    <citation type="journal article" date="2006" name="Sci. China, Ser. C, Life Sci.">
        <title>Comparison of the virulence plasmid genomes of two strains of Shigella which lost the ability to bind Congo red.</title>
        <authorList>
            <person name="Xiong Z."/>
            <person name="Tang X."/>
            <person name="Yang F."/>
            <person name="Zhang X."/>
            <person name="Yang J."/>
            <person name="Chen L."/>
            <person name="Nie H."/>
            <person name="Yan Y."/>
            <person name="Jiang Y."/>
            <person name="Wang J."/>
            <person name="Xue Y."/>
            <person name="Xu X."/>
            <person name="Zhu Y."/>
            <person name="Dong J."/>
            <person name="An L."/>
            <person name="Wang X."/>
            <person name="Jin Q."/>
        </authorList>
    </citation>
    <scope>NUCLEOTIDE SEQUENCE [GENOMIC DNA]</scope>
    <source>
        <strain>Serotype 5</strain>
        <plasmid>pSF5</plasmid>
    </source>
</reference>
<reference key="5">
    <citation type="journal article" date="2002" name="Nucleic Acids Res.">
        <title>Genome sequence of Shigella flexneri 2a: insights into pathogenicity through comparison with genomes of Escherichia coli K12 and O157.</title>
        <authorList>
            <person name="Jin Q."/>
            <person name="Yuan Z."/>
            <person name="Xu J."/>
            <person name="Wang Y."/>
            <person name="Shen Y."/>
            <person name="Lu W."/>
            <person name="Wang J."/>
            <person name="Liu H."/>
            <person name="Yang J."/>
            <person name="Yang F."/>
            <person name="Zhang X."/>
            <person name="Zhang J."/>
            <person name="Yang G."/>
            <person name="Wu H."/>
            <person name="Qu D."/>
            <person name="Dong J."/>
            <person name="Sun L."/>
            <person name="Xue Y."/>
            <person name="Zhao A."/>
            <person name="Gao Y."/>
            <person name="Zhu J."/>
            <person name="Kan B."/>
            <person name="Ding K."/>
            <person name="Chen S."/>
            <person name="Cheng H."/>
            <person name="Yao Z."/>
            <person name="He B."/>
            <person name="Chen R."/>
            <person name="Ma D."/>
            <person name="Qiang B."/>
            <person name="Wen Y."/>
            <person name="Hou Y."/>
            <person name="Yu J."/>
        </authorList>
    </citation>
    <scope>NUCLEOTIDE SEQUENCE [LARGE SCALE GENOMIC DNA]</scope>
    <source>
        <strain>301 / Serotype 2a</strain>
        <plasmid>pCP301</plasmid>
    </source>
</reference>
<reference key="6">
    <citation type="journal article" date="2007" name="J. Mol. Evol.">
        <title>Revisiting the molecular evolutionary history of Shigella spp.</title>
        <authorList>
            <person name="Yang J."/>
            <person name="Nie H."/>
            <person name="Chen L."/>
            <person name="Zhang X."/>
            <person name="Yang F."/>
            <person name="Xu X."/>
            <person name="Zhu Y."/>
            <person name="Yu J."/>
            <person name="Jin Q."/>
        </authorList>
    </citation>
    <scope>NUCLEOTIDE SEQUENCE [GENOMIC DNA] OF 23-192</scope>
    <source>
        <strain>246 / Serotype 5</strain>
        <strain>251 / Serotype 2b</strain>
        <strain>571 / Serotype 1a</strain>
        <strain>575 / Serotype 3</strain>
        <strain>576 / Serotype 4a</strain>
        <strain>577 / Serotype 4b</strain>
        <strain>579 / Serotype 6</strain>
        <strain>580</strain>
        <plasmid>pSf1a_571</plasmid>
        <plasmid>pSf2b_251</plasmid>
        <plasmid>pSf3_575</plasmid>
        <plasmid>pSf4a_576</plasmid>
        <plasmid>pSf4b_577</plasmid>
        <plasmid>pSf5_246</plasmid>
        <plasmid>pSf6_579</plasmid>
        <plasmid>pSfx_580</plasmid>
    </source>
</reference>
<reference key="7">
    <citation type="journal article" date="2002" name="J. Bacteriol.">
        <title>MxiE regulates intracellular expression of factors secreted by the Shigella flexneri 2a type III secretion system.</title>
        <authorList>
            <person name="Kane C.D."/>
            <person name="Schuch R."/>
            <person name="Day W.A. Jr."/>
            <person name="Maurelli A.T."/>
        </authorList>
    </citation>
    <scope>REGULATION BY MXIE</scope>
    <scope>INDUCTION</scope>
    <source>
        <strain>ATCC 700930 / 2457T / Serotype 2a</strain>
        <plasmid>pWR100</plasmid>
    </source>
</reference>
<reference key="8">
    <citation type="journal article" date="2002" name="J. Bacteriol.">
        <title>Identification of the cis-acting site involved in activation of promoters regulated by activity of the type III secretion apparatus in Shigella flexneri.</title>
        <authorList>
            <person name="Mavris M."/>
            <person name="Sansonetti P.J."/>
            <person name="Parsot C."/>
        </authorList>
    </citation>
    <scope>REGULATION BY MXIE AND IPGC</scope>
    <source>
        <strain>M90T / Serotype 5a</strain>
        <plasmid>pWR100</plasmid>
    </source>
</reference>
<reference key="9">
    <citation type="journal article" date="2005" name="Microbiology">
        <title>Analysis of virulence plasmid gene expression defines three classes of effectors in the type III secretion system of Shigella flexneri.</title>
        <authorList>
            <person name="Le Gall T."/>
            <person name="Mavris M."/>
            <person name="Martino M.C."/>
            <person name="Bernardini M.L."/>
            <person name="Denamur E."/>
            <person name="Parsot C."/>
        </authorList>
    </citation>
    <scope>REGULATION BY MXIE AND VIRB</scope>
    <source>
        <strain>M90T / Serotype 5a</strain>
        <plasmid>pWR100</plasmid>
    </source>
</reference>
<reference key="10">
    <citation type="journal article" date="2006" name="Infect. Immun.">
        <title>OspF and OspC1 are Shigella flexneri type III secretion system effectors that are required for postinvasion aspects of virulence.</title>
        <authorList>
            <person name="Zurawski D.V."/>
            <person name="Mitsuhata C."/>
            <person name="Mumy K.L."/>
            <person name="McCormick B.A."/>
            <person name="Maurelli A.T."/>
        </authorList>
    </citation>
    <scope>ACTIVATION OF MEK/ERK</scope>
    <scope>SUBCELLULAR LOCATION</scope>
    <source>
        <strain>ATCC 700930 / 2457T / Serotype 2a</strain>
        <plasmid>pWR100</plasmid>
    </source>
</reference>
<reference key="11">
    <citation type="journal article" date="2007" name="Nat. Immunol.">
        <title>An injected bacterial effector targets chromatin access for transcription factor NF-kappaB to alter transcription of host genes involved in immune responses.</title>
        <authorList>
            <person name="Arbibe L."/>
            <person name="Kim D.W."/>
            <person name="Batsche E."/>
            <person name="Pedron T."/>
            <person name="Mateescu B."/>
            <person name="Muchardt C."/>
            <person name="Parsot C."/>
            <person name="Sansonetti P.J."/>
        </authorList>
    </citation>
    <scope>FUNCTION</scope>
    <scope>BIOPHYSICOCHEMICAL PROPERTIES</scope>
    <scope>ACTIVITY REGULATION</scope>
    <scope>SUBCELLULAR LOCATION</scope>
    <source>
        <strain>M90T / Serotype 5a</strain>
        <plasmid>pWR100</plasmid>
    </source>
</reference>
<reference key="12">
    <citation type="journal article" date="2007" name="PLoS Pathog.">
        <title>Yeast functional genomic screens lead to identification of a role for a bacterial effector in innate immunity regulation.</title>
        <authorList>
            <person name="Kramer R.W."/>
            <person name="Slagowski N.L."/>
            <person name="Eze N.A."/>
            <person name="Giddings K.S."/>
            <person name="Morrison M.F."/>
            <person name="Siggers K.A."/>
            <person name="Starnbach M.N."/>
            <person name="Lesser C.F."/>
        </authorList>
    </citation>
    <scope>FUNCTION</scope>
    <scope>SUBCELLULAR LOCATION</scope>
    <source>
        <strain>ATCC 700930 / 2457T / Serotype 2a</strain>
        <plasmid>pWR100</plasmid>
    </source>
</reference>
<reference key="13">
    <citation type="journal article" date="2007" name="Science">
        <title>The phosphothreonine lyase activity of a bacterial type III effector family.</title>
        <authorList>
            <person name="Li H."/>
            <person name="Xu H."/>
            <person name="Zhou Y."/>
            <person name="Zhang J."/>
            <person name="Long C."/>
            <person name="Li S."/>
            <person name="Chen S."/>
            <person name="Zhou J.-M."/>
            <person name="Shao F."/>
        </authorList>
    </citation>
    <scope>FUNCTION</scope>
    <scope>PHOSPHOTHREONINE LYASE ACTIVITY</scope>
    <scope>BIOPHYSICOCHEMICAL PROPERTIES</scope>
    <scope>MUTAGENESIS OF ASP-101; LYS-102; HIS-104; ASP-127; ASP-131; LYS-134; ASP-137; ASP-160; ARG-175 AND ARG-218</scope>
    <source>
        <strain>301 / Serotype 2a</strain>
        <plasmid>pCP301</plasmid>
    </source>
</reference>
<evidence type="ECO:0000250" key="1"/>
<evidence type="ECO:0000269" key="2">
    <source>
    </source>
</evidence>
<evidence type="ECO:0000269" key="3">
    <source>
    </source>
</evidence>
<evidence type="ECO:0000269" key="4">
    <source>
    </source>
</evidence>
<evidence type="ECO:0000269" key="5">
    <source>
    </source>
</evidence>
<evidence type="ECO:0000269" key="6">
    <source>
    </source>
</evidence>
<evidence type="ECO:0000269" key="7">
    <source>
    </source>
</evidence>
<evidence type="ECO:0000305" key="8"/>
<evidence type="ECO:0007829" key="9">
    <source>
        <dbReference type="PDB" id="3I0U"/>
    </source>
</evidence>